<comment type="function">
    <text evidence="1">Small subunit of the arginine-specific carbamoyl phosphate synthase (CPSase). CPSase catalyzes the formation of carbamoyl phosphate from the ammonia moiety of glutamine, carbonate, and phosphate donated by ATP, the first step of the arginine biosynthetic pathway. The small subunit (glutamine amidotransferase) binds and cleaves glutamine to supply the large subunit with the substrate ammonia.</text>
</comment>
<comment type="catalytic activity">
    <reaction evidence="1">
        <text>hydrogencarbonate + L-glutamine + 2 ATP + H2O = carbamoyl phosphate + L-glutamate + 2 ADP + phosphate + 2 H(+)</text>
        <dbReference type="Rhea" id="RHEA:18633"/>
        <dbReference type="ChEBI" id="CHEBI:15377"/>
        <dbReference type="ChEBI" id="CHEBI:15378"/>
        <dbReference type="ChEBI" id="CHEBI:17544"/>
        <dbReference type="ChEBI" id="CHEBI:29985"/>
        <dbReference type="ChEBI" id="CHEBI:30616"/>
        <dbReference type="ChEBI" id="CHEBI:43474"/>
        <dbReference type="ChEBI" id="CHEBI:58228"/>
        <dbReference type="ChEBI" id="CHEBI:58359"/>
        <dbReference type="ChEBI" id="CHEBI:456216"/>
        <dbReference type="EC" id="6.3.5.5"/>
    </reaction>
</comment>
<comment type="catalytic activity">
    <molecule>Carbamoyl phosphate synthase arginine-specific small chain</molecule>
    <reaction evidence="1">
        <text>L-glutamine + H2O = L-glutamate + NH4(+)</text>
        <dbReference type="Rhea" id="RHEA:15889"/>
        <dbReference type="ChEBI" id="CHEBI:15377"/>
        <dbReference type="ChEBI" id="CHEBI:28938"/>
        <dbReference type="ChEBI" id="CHEBI:29985"/>
        <dbReference type="ChEBI" id="CHEBI:58359"/>
    </reaction>
</comment>
<comment type="pathway">
    <text evidence="1">Amino-acid biosynthesis; L-arginine biosynthesis; carbamoyl phosphate from bicarbonate: step 1/1.</text>
</comment>
<comment type="subunit">
    <text evidence="1">Heterodimer composed of 2 chains; the small (or glutamine) chain promotes the hydrolysis of glutamine to ammonia, which is used by the large (or ammonia) chain to synthesize carbamoyl phosphate.</text>
</comment>
<comment type="subcellular location">
    <subcellularLocation>
        <location evidence="1">Mitochondrion matrix</location>
    </subcellularLocation>
</comment>
<comment type="miscellaneous">
    <text>In eukaryotes this enzyme is synthesized by two pathway-specific (arginine and pyrimidine) under separate control.</text>
</comment>
<comment type="similarity">
    <text evidence="4">Belongs to the CarA family.</text>
</comment>
<keyword id="KW-0028">Amino-acid biosynthesis</keyword>
<keyword id="KW-0055">Arginine biosynthesis</keyword>
<keyword id="KW-0067">ATP-binding</keyword>
<keyword id="KW-0315">Glutamine amidotransferase</keyword>
<keyword id="KW-0436">Ligase</keyword>
<keyword id="KW-0496">Mitochondrion</keyword>
<keyword id="KW-0547">Nucleotide-binding</keyword>
<keyword id="KW-0809">Transit peptide</keyword>
<organism>
    <name type="scientific">Hypocrea virens</name>
    <name type="common">Gliocladium virens</name>
    <name type="synonym">Trichoderma virens</name>
    <dbReference type="NCBI Taxonomy" id="29875"/>
    <lineage>
        <taxon>Eukaryota</taxon>
        <taxon>Fungi</taxon>
        <taxon>Dikarya</taxon>
        <taxon>Ascomycota</taxon>
        <taxon>Pezizomycotina</taxon>
        <taxon>Sordariomycetes</taxon>
        <taxon>Hypocreomycetidae</taxon>
        <taxon>Hypocreales</taxon>
        <taxon>Hypocreaceae</taxon>
        <taxon>Trichoderma</taxon>
    </lineage>
</organism>
<sequence length="453" mass="49434">MFSKLAANFAQRAAGSAAGTTRRVAFQTRFVSSQTLANGSKGRAIPFQKPGSVPATFTIRDGPVFRGKAFGANANISGEAVFTTSLVGYPESMTDPSYRGQILVFTQPLIGNYGVPSNERDEYNLLKYFESPHIQCAGVVVSDVALNYSHWTAVESLSEWCAREASPPSPASDTRAIVTHLREQGSSLARISIGDEYDADEDESFVDPGQINLVKRVSTKAPFVIESPGADLHVALIDCGVKENILRQLVSRGASLTVFPYNYPIHKVADHFDGVFISNGPGDPIHCQETVYNLARLMETSSIPIMGICLGHQLLAMAVGAKTIKMKYGNRAHNIPALDLTTGQCHITSQNHGYAVDASTLPNDFKEYFVNLNDGSNEGMMHRTRPIFSTQFHPEAKGGPMDSSYLFEKYLENVRAAKSAQRVYKDNRPSQYVLDVLSKERVGVEPVPLVGFA</sequence>
<evidence type="ECO:0000250" key="1">
    <source>
        <dbReference type="UniProtKB" id="P22572"/>
    </source>
</evidence>
<evidence type="ECO:0000255" key="2"/>
<evidence type="ECO:0000255" key="3">
    <source>
        <dbReference type="PROSITE-ProRule" id="PRU00605"/>
    </source>
</evidence>
<evidence type="ECO:0000305" key="4"/>
<protein>
    <recommendedName>
        <fullName>Carbamoyl phosphate synthase arginine-specific small chain</fullName>
        <shortName>CPS</shortName>
        <shortName>CPSase</shortName>
        <ecNumber evidence="1">6.3.5.5</ecNumber>
    </recommendedName>
    <alternativeName>
        <fullName>Arginine-specific carbamoyl phosphate synthetase, glutamine chain</fullName>
    </alternativeName>
    <alternativeName>
        <fullName>Glutamine-dependent carbamoyl phosphate synthetase</fullName>
    </alternativeName>
</protein>
<feature type="transit peptide" description="Mitochondrion" evidence="2">
    <location>
        <begin position="1"/>
        <end position="13"/>
    </location>
</feature>
<feature type="chain" id="PRO_0000004223" description="Carbamoyl phosphate synthase arginine-specific small chain" evidence="2">
    <location>
        <begin position="14"/>
        <end position="453"/>
    </location>
</feature>
<feature type="domain" description="Glutamine amidotransferase type-1" evidence="3">
    <location>
        <begin position="233"/>
        <end position="420"/>
    </location>
</feature>
<feature type="active site" description="Nucleophile" evidence="3">
    <location>
        <position position="309"/>
    </location>
</feature>
<feature type="active site" evidence="3">
    <location>
        <position position="393"/>
    </location>
</feature>
<feature type="active site" evidence="3">
    <location>
        <position position="395"/>
    </location>
</feature>
<proteinExistence type="inferred from homology"/>
<gene>
    <name type="primary">cpa1</name>
    <name type="synonym">arg2</name>
</gene>
<reference key="1">
    <citation type="journal article" date="1998" name="Fungal Genet. Biol.">
        <title>The arg2 gene of Trichoderma virens: cloning and development of a homologous transformation system.</title>
        <authorList>
            <person name="Baek J.M."/>
            <person name="Kenerley C.M."/>
        </authorList>
    </citation>
    <scope>NUCLEOTIDE SEQUENCE [GENOMIC DNA]</scope>
</reference>
<name>CARA_HYPVI</name>
<dbReference type="EC" id="6.3.5.5" evidence="1"/>
<dbReference type="EMBL" id="AF001029">
    <property type="protein sequence ID" value="AAB58299.1"/>
    <property type="molecule type" value="Genomic_DNA"/>
</dbReference>
<dbReference type="SMR" id="P87183"/>
<dbReference type="UniPathway" id="UPA00068">
    <property type="reaction ID" value="UER00171"/>
</dbReference>
<dbReference type="GO" id="GO:0005759">
    <property type="term" value="C:mitochondrial matrix"/>
    <property type="evidence" value="ECO:0007669"/>
    <property type="project" value="UniProtKB-SubCell"/>
</dbReference>
<dbReference type="GO" id="GO:0005524">
    <property type="term" value="F:ATP binding"/>
    <property type="evidence" value="ECO:0007669"/>
    <property type="project" value="UniProtKB-KW"/>
</dbReference>
<dbReference type="GO" id="GO:0004088">
    <property type="term" value="F:carbamoyl-phosphate synthase (glutamine-hydrolyzing) activity"/>
    <property type="evidence" value="ECO:0007669"/>
    <property type="project" value="UniProtKB-EC"/>
</dbReference>
<dbReference type="GO" id="GO:0004359">
    <property type="term" value="F:glutaminase activity"/>
    <property type="evidence" value="ECO:0007669"/>
    <property type="project" value="RHEA"/>
</dbReference>
<dbReference type="GO" id="GO:0006207">
    <property type="term" value="P:'de novo' pyrimidine nucleobase biosynthetic process"/>
    <property type="evidence" value="ECO:0007669"/>
    <property type="project" value="InterPro"/>
</dbReference>
<dbReference type="GO" id="GO:0006541">
    <property type="term" value="P:glutamine metabolic process"/>
    <property type="evidence" value="ECO:0007669"/>
    <property type="project" value="InterPro"/>
</dbReference>
<dbReference type="GO" id="GO:0006526">
    <property type="term" value="P:L-arginine biosynthetic process"/>
    <property type="evidence" value="ECO:0007669"/>
    <property type="project" value="UniProtKB-UniPathway"/>
</dbReference>
<dbReference type="CDD" id="cd01744">
    <property type="entry name" value="GATase1_CPSase"/>
    <property type="match status" value="1"/>
</dbReference>
<dbReference type="FunFam" id="3.40.50.880:FF:000016">
    <property type="entry name" value="Carbamoyl-phosphate synthase arginine-specific small chain"/>
    <property type="match status" value="1"/>
</dbReference>
<dbReference type="FunFam" id="3.50.30.20:FF:000003">
    <property type="entry name" value="Carbamoyl-phosphate synthase arginine-specific small chain"/>
    <property type="match status" value="1"/>
</dbReference>
<dbReference type="Gene3D" id="3.40.50.880">
    <property type="match status" value="1"/>
</dbReference>
<dbReference type="Gene3D" id="3.50.30.20">
    <property type="entry name" value="Carbamoyl-phosphate synthase small subunit, N-terminal domain"/>
    <property type="match status" value="1"/>
</dbReference>
<dbReference type="HAMAP" id="MF_01209">
    <property type="entry name" value="CPSase_S_chain"/>
    <property type="match status" value="1"/>
</dbReference>
<dbReference type="InterPro" id="IPR050472">
    <property type="entry name" value="Anth_synth/Amidotransfase"/>
</dbReference>
<dbReference type="InterPro" id="IPR006274">
    <property type="entry name" value="CarbamoylP_synth_ssu"/>
</dbReference>
<dbReference type="InterPro" id="IPR002474">
    <property type="entry name" value="CarbamoylP_synth_ssu_N"/>
</dbReference>
<dbReference type="InterPro" id="IPR036480">
    <property type="entry name" value="CarbP_synth_ssu_N_sf"/>
</dbReference>
<dbReference type="InterPro" id="IPR029062">
    <property type="entry name" value="Class_I_gatase-like"/>
</dbReference>
<dbReference type="InterPro" id="IPR035686">
    <property type="entry name" value="CPSase_GATase1"/>
</dbReference>
<dbReference type="InterPro" id="IPR017926">
    <property type="entry name" value="GATASE"/>
</dbReference>
<dbReference type="NCBIfam" id="TIGR01368">
    <property type="entry name" value="CPSaseIIsmall"/>
    <property type="match status" value="1"/>
</dbReference>
<dbReference type="NCBIfam" id="NF009475">
    <property type="entry name" value="PRK12838.1"/>
    <property type="match status" value="1"/>
</dbReference>
<dbReference type="PANTHER" id="PTHR43418:SF7">
    <property type="entry name" value="CARBAMOYL-PHOSPHATE SYNTHASE SMALL CHAIN"/>
    <property type="match status" value="1"/>
</dbReference>
<dbReference type="PANTHER" id="PTHR43418">
    <property type="entry name" value="MULTIFUNCTIONAL TRYPTOPHAN BIOSYNTHESIS PROTEIN-RELATED"/>
    <property type="match status" value="1"/>
</dbReference>
<dbReference type="Pfam" id="PF00988">
    <property type="entry name" value="CPSase_sm_chain"/>
    <property type="match status" value="1"/>
</dbReference>
<dbReference type="Pfam" id="PF00117">
    <property type="entry name" value="GATase"/>
    <property type="match status" value="1"/>
</dbReference>
<dbReference type="PRINTS" id="PR00097">
    <property type="entry name" value="ANTSNTHASEII"/>
</dbReference>
<dbReference type="PRINTS" id="PR00099">
    <property type="entry name" value="CPSGATASE"/>
</dbReference>
<dbReference type="PRINTS" id="PR00096">
    <property type="entry name" value="GATASE"/>
</dbReference>
<dbReference type="SMART" id="SM01097">
    <property type="entry name" value="CPSase_sm_chain"/>
    <property type="match status" value="1"/>
</dbReference>
<dbReference type="SUPFAM" id="SSF52021">
    <property type="entry name" value="Carbamoyl phosphate synthetase, small subunit N-terminal domain"/>
    <property type="match status" value="1"/>
</dbReference>
<dbReference type="SUPFAM" id="SSF52317">
    <property type="entry name" value="Class I glutamine amidotransferase-like"/>
    <property type="match status" value="1"/>
</dbReference>
<dbReference type="PROSITE" id="PS51273">
    <property type="entry name" value="GATASE_TYPE_1"/>
    <property type="match status" value="1"/>
</dbReference>
<accession>P87183</accession>